<comment type="function">
    <text evidence="1">Hydrolyzes the pyrophosphate bond of UDP-2,3-diacylglucosamine to yield 2,3-diacylglucosamine 1-phosphate (lipid X) and UMP by catalyzing the attack of water at the alpha-P atom. Involved in the biosynthesis of lipid A, a phosphorylated glycolipid that anchors the lipopolysaccharide to the outer membrane of the cell.</text>
</comment>
<comment type="catalytic activity">
    <reaction evidence="1">
        <text>UDP-2-N,3-O-bis[(3R)-3-hydroxytetradecanoyl]-alpha-D-glucosamine + H2O = 2-N,3-O-bis[(3R)-3-hydroxytetradecanoyl]-alpha-D-glucosaminyl 1-phosphate + UMP + 2 H(+)</text>
        <dbReference type="Rhea" id="RHEA:25213"/>
        <dbReference type="ChEBI" id="CHEBI:15377"/>
        <dbReference type="ChEBI" id="CHEBI:15378"/>
        <dbReference type="ChEBI" id="CHEBI:57865"/>
        <dbReference type="ChEBI" id="CHEBI:57957"/>
        <dbReference type="ChEBI" id="CHEBI:78847"/>
        <dbReference type="EC" id="3.6.1.54"/>
    </reaction>
</comment>
<comment type="cofactor">
    <cofactor evidence="1">
        <name>Mn(2+)</name>
        <dbReference type="ChEBI" id="CHEBI:29035"/>
    </cofactor>
    <text evidence="1">Binds 2 Mn(2+) ions per subunit in a binuclear metal center.</text>
</comment>
<comment type="pathway">
    <text evidence="1">Glycolipid biosynthesis; lipid IV(A) biosynthesis; lipid IV(A) from (3R)-3-hydroxytetradecanoyl-[acyl-carrier-protein] and UDP-N-acetyl-alpha-D-glucosamine: step 4/6.</text>
</comment>
<comment type="subcellular location">
    <subcellularLocation>
        <location evidence="1">Cell inner membrane</location>
        <topology evidence="1">Peripheral membrane protein</topology>
        <orientation evidence="1">Cytoplasmic side</orientation>
    </subcellularLocation>
</comment>
<comment type="similarity">
    <text evidence="1">Belongs to the LpxH family.</text>
</comment>
<evidence type="ECO:0000255" key="1">
    <source>
        <dbReference type="HAMAP-Rule" id="MF_00575"/>
    </source>
</evidence>
<feature type="chain" id="PRO_0000214123" description="UDP-2,3-diacylglucosamine hydrolase">
    <location>
        <begin position="1"/>
        <end position="239"/>
    </location>
</feature>
<feature type="binding site" evidence="1">
    <location>
        <position position="8"/>
    </location>
    <ligand>
        <name>Mn(2+)</name>
        <dbReference type="ChEBI" id="CHEBI:29035"/>
        <label>1</label>
    </ligand>
</feature>
<feature type="binding site" evidence="1">
    <location>
        <position position="10"/>
    </location>
    <ligand>
        <name>Mn(2+)</name>
        <dbReference type="ChEBI" id="CHEBI:29035"/>
        <label>1</label>
    </ligand>
</feature>
<feature type="binding site" evidence="1">
    <location>
        <position position="41"/>
    </location>
    <ligand>
        <name>Mn(2+)</name>
        <dbReference type="ChEBI" id="CHEBI:29035"/>
        <label>1</label>
    </ligand>
</feature>
<feature type="binding site" evidence="1">
    <location>
        <position position="41"/>
    </location>
    <ligand>
        <name>Mn(2+)</name>
        <dbReference type="ChEBI" id="CHEBI:29035"/>
        <label>2</label>
    </ligand>
</feature>
<feature type="binding site" evidence="1">
    <location>
        <begin position="78"/>
        <end position="79"/>
    </location>
    <ligand>
        <name>substrate</name>
    </ligand>
</feature>
<feature type="binding site" evidence="1">
    <location>
        <position position="78"/>
    </location>
    <ligand>
        <name>Mn(2+)</name>
        <dbReference type="ChEBI" id="CHEBI:29035"/>
        <label>2</label>
    </ligand>
</feature>
<feature type="binding site" evidence="1">
    <location>
        <position position="113"/>
    </location>
    <ligand>
        <name>Mn(2+)</name>
        <dbReference type="ChEBI" id="CHEBI:29035"/>
        <label>2</label>
    </ligand>
</feature>
<feature type="binding site" evidence="1">
    <location>
        <position position="121"/>
    </location>
    <ligand>
        <name>substrate</name>
    </ligand>
</feature>
<feature type="binding site" evidence="1">
    <location>
        <position position="159"/>
    </location>
    <ligand>
        <name>substrate</name>
    </ligand>
</feature>
<feature type="binding site" evidence="1">
    <location>
        <position position="163"/>
    </location>
    <ligand>
        <name>substrate</name>
    </ligand>
</feature>
<feature type="binding site" evidence="1">
    <location>
        <position position="166"/>
    </location>
    <ligand>
        <name>substrate</name>
    </ligand>
</feature>
<feature type="binding site" evidence="1">
    <location>
        <position position="194"/>
    </location>
    <ligand>
        <name>Mn(2+)</name>
        <dbReference type="ChEBI" id="CHEBI:29035"/>
        <label>2</label>
    </ligand>
</feature>
<feature type="binding site" evidence="1">
    <location>
        <position position="194"/>
    </location>
    <ligand>
        <name>substrate</name>
    </ligand>
</feature>
<feature type="binding site" evidence="1">
    <location>
        <position position="196"/>
    </location>
    <ligand>
        <name>Mn(2+)</name>
        <dbReference type="ChEBI" id="CHEBI:29035"/>
        <label>1</label>
    </ligand>
</feature>
<reference key="1">
    <citation type="journal article" date="2002" name="Nat. Biotechnol.">
        <title>Genome sequence of the dissimilatory metal ion-reducing bacterium Shewanella oneidensis.</title>
        <authorList>
            <person name="Heidelberg J.F."/>
            <person name="Paulsen I.T."/>
            <person name="Nelson K.E."/>
            <person name="Gaidos E.J."/>
            <person name="Nelson W.C."/>
            <person name="Read T.D."/>
            <person name="Eisen J.A."/>
            <person name="Seshadri R."/>
            <person name="Ward N.L."/>
            <person name="Methe B.A."/>
            <person name="Clayton R.A."/>
            <person name="Meyer T."/>
            <person name="Tsapin A."/>
            <person name="Scott J."/>
            <person name="Beanan M.J."/>
            <person name="Brinkac L.M."/>
            <person name="Daugherty S.C."/>
            <person name="DeBoy R.T."/>
            <person name="Dodson R.J."/>
            <person name="Durkin A.S."/>
            <person name="Haft D.H."/>
            <person name="Kolonay J.F."/>
            <person name="Madupu R."/>
            <person name="Peterson J.D."/>
            <person name="Umayam L.A."/>
            <person name="White O."/>
            <person name="Wolf A.M."/>
            <person name="Vamathevan J.J."/>
            <person name="Weidman J.F."/>
            <person name="Impraim M."/>
            <person name="Lee K."/>
            <person name="Berry K.J."/>
            <person name="Lee C."/>
            <person name="Mueller J."/>
            <person name="Khouri H.M."/>
            <person name="Gill J."/>
            <person name="Utterback T.R."/>
            <person name="McDonald L.A."/>
            <person name="Feldblyum T.V."/>
            <person name="Smith H.O."/>
            <person name="Venter J.C."/>
            <person name="Nealson K.H."/>
            <person name="Fraser C.M."/>
        </authorList>
    </citation>
    <scope>NUCLEOTIDE SEQUENCE [LARGE SCALE GENOMIC DNA]</scope>
    <source>
        <strain>ATCC 700550 / JCM 31522 / CIP 106686 / LMG 19005 / NCIMB 14063 / MR-1</strain>
    </source>
</reference>
<keyword id="KW-0997">Cell inner membrane</keyword>
<keyword id="KW-1003">Cell membrane</keyword>
<keyword id="KW-0378">Hydrolase</keyword>
<keyword id="KW-0441">Lipid A biosynthesis</keyword>
<keyword id="KW-0444">Lipid biosynthesis</keyword>
<keyword id="KW-0443">Lipid metabolism</keyword>
<keyword id="KW-0464">Manganese</keyword>
<keyword id="KW-0472">Membrane</keyword>
<keyword id="KW-0479">Metal-binding</keyword>
<keyword id="KW-1185">Reference proteome</keyword>
<accession>Q8EG24</accession>
<name>LPXH_SHEON</name>
<gene>
    <name evidence="1" type="primary">lpxH</name>
    <name type="ordered locus">SO_1789</name>
</gene>
<sequence length="239" mass="27013">MRTLFIGDLHLSADRLDITQAFNRFLDTELDDADALYILGDLFEVWVGDDLAAPFALELAHKLKQVSQTLPIFFIHGNRDFMLGKRFAEAAGMQLLPEVTCIELYGVKTVILHGDSLCTLDKAYQRFRKLRSFACARWLYSCLPKKRRQAIANKIRSNSQSSNQQKSYVIMDVEPSAVNALFVKTHTTRMIHGHTHRPAIHIVDNACQRIVVGDWYEQGSVLSVSANGVDLKSLPFETT</sequence>
<proteinExistence type="inferred from homology"/>
<protein>
    <recommendedName>
        <fullName evidence="1">UDP-2,3-diacylglucosamine hydrolase</fullName>
        <ecNumber evidence="1">3.6.1.54</ecNumber>
    </recommendedName>
    <alternativeName>
        <fullName evidence="1">UDP-2,3-diacylglucosamine diphosphatase</fullName>
    </alternativeName>
</protein>
<dbReference type="EC" id="3.6.1.54" evidence="1"/>
<dbReference type="EMBL" id="AE014299">
    <property type="protein sequence ID" value="AAN54842.1"/>
    <property type="molecule type" value="Genomic_DNA"/>
</dbReference>
<dbReference type="RefSeq" id="NP_717398.1">
    <property type="nucleotide sequence ID" value="NC_004347.2"/>
</dbReference>
<dbReference type="RefSeq" id="WP_011071911.1">
    <property type="nucleotide sequence ID" value="NC_004347.2"/>
</dbReference>
<dbReference type="SMR" id="Q8EG24"/>
<dbReference type="STRING" id="211586.SO_1789"/>
<dbReference type="PaxDb" id="211586-SO_1789"/>
<dbReference type="KEGG" id="son:SO_1789"/>
<dbReference type="PATRIC" id="fig|211586.12.peg.1719"/>
<dbReference type="eggNOG" id="COG2908">
    <property type="taxonomic scope" value="Bacteria"/>
</dbReference>
<dbReference type="HOGENOM" id="CLU_074586_0_0_6"/>
<dbReference type="OrthoDB" id="9783283at2"/>
<dbReference type="PhylomeDB" id="Q8EG24"/>
<dbReference type="BioCyc" id="SONE211586:G1GMP-1637-MONOMER"/>
<dbReference type="UniPathway" id="UPA00359">
    <property type="reaction ID" value="UER00480"/>
</dbReference>
<dbReference type="Proteomes" id="UP000008186">
    <property type="component" value="Chromosome"/>
</dbReference>
<dbReference type="GO" id="GO:0005737">
    <property type="term" value="C:cytoplasm"/>
    <property type="evidence" value="ECO:0007669"/>
    <property type="project" value="InterPro"/>
</dbReference>
<dbReference type="GO" id="GO:0019897">
    <property type="term" value="C:extrinsic component of plasma membrane"/>
    <property type="evidence" value="ECO:0007669"/>
    <property type="project" value="UniProtKB-UniRule"/>
</dbReference>
<dbReference type="GO" id="GO:0030145">
    <property type="term" value="F:manganese ion binding"/>
    <property type="evidence" value="ECO:0007669"/>
    <property type="project" value="UniProtKB-UniRule"/>
</dbReference>
<dbReference type="GO" id="GO:0008758">
    <property type="term" value="F:UDP-2,3-diacylglucosamine hydrolase activity"/>
    <property type="evidence" value="ECO:0000318"/>
    <property type="project" value="GO_Central"/>
</dbReference>
<dbReference type="GO" id="GO:0009245">
    <property type="term" value="P:lipid A biosynthetic process"/>
    <property type="evidence" value="ECO:0000318"/>
    <property type="project" value="GO_Central"/>
</dbReference>
<dbReference type="CDD" id="cd07398">
    <property type="entry name" value="MPP_YbbF-LpxH"/>
    <property type="match status" value="1"/>
</dbReference>
<dbReference type="Gene3D" id="3.60.21.10">
    <property type="match status" value="1"/>
</dbReference>
<dbReference type="HAMAP" id="MF_00575">
    <property type="entry name" value="LpxH"/>
    <property type="match status" value="1"/>
</dbReference>
<dbReference type="InterPro" id="IPR004843">
    <property type="entry name" value="Calcineurin-like_PHP_ApaH"/>
</dbReference>
<dbReference type="InterPro" id="IPR043461">
    <property type="entry name" value="LpxH-like"/>
</dbReference>
<dbReference type="InterPro" id="IPR029052">
    <property type="entry name" value="Metallo-depent_PP-like"/>
</dbReference>
<dbReference type="InterPro" id="IPR010138">
    <property type="entry name" value="UDP-diacylglucosamine_Hdrlase"/>
</dbReference>
<dbReference type="NCBIfam" id="TIGR01854">
    <property type="entry name" value="lipid_A_lpxH"/>
    <property type="match status" value="1"/>
</dbReference>
<dbReference type="NCBIfam" id="NF003743">
    <property type="entry name" value="PRK05340.1"/>
    <property type="match status" value="1"/>
</dbReference>
<dbReference type="PANTHER" id="PTHR34990:SF1">
    <property type="entry name" value="UDP-2,3-DIACYLGLUCOSAMINE HYDROLASE"/>
    <property type="match status" value="1"/>
</dbReference>
<dbReference type="PANTHER" id="PTHR34990">
    <property type="entry name" value="UDP-2,3-DIACYLGLUCOSAMINE HYDROLASE-RELATED"/>
    <property type="match status" value="1"/>
</dbReference>
<dbReference type="Pfam" id="PF00149">
    <property type="entry name" value="Metallophos"/>
    <property type="match status" value="1"/>
</dbReference>
<dbReference type="SUPFAM" id="SSF56300">
    <property type="entry name" value="Metallo-dependent phosphatases"/>
    <property type="match status" value="1"/>
</dbReference>
<organism>
    <name type="scientific">Shewanella oneidensis (strain ATCC 700550 / JCM 31522 / CIP 106686 / LMG 19005 / NCIMB 14063 / MR-1)</name>
    <dbReference type="NCBI Taxonomy" id="211586"/>
    <lineage>
        <taxon>Bacteria</taxon>
        <taxon>Pseudomonadati</taxon>
        <taxon>Pseudomonadota</taxon>
        <taxon>Gammaproteobacteria</taxon>
        <taxon>Alteromonadales</taxon>
        <taxon>Shewanellaceae</taxon>
        <taxon>Shewanella</taxon>
    </lineage>
</organism>